<reference key="1">
    <citation type="journal article" date="2009" name="PLoS Genet.">
        <title>Organised genome dynamics in the Escherichia coli species results in highly diverse adaptive paths.</title>
        <authorList>
            <person name="Touchon M."/>
            <person name="Hoede C."/>
            <person name="Tenaillon O."/>
            <person name="Barbe V."/>
            <person name="Baeriswyl S."/>
            <person name="Bidet P."/>
            <person name="Bingen E."/>
            <person name="Bonacorsi S."/>
            <person name="Bouchier C."/>
            <person name="Bouvet O."/>
            <person name="Calteau A."/>
            <person name="Chiapello H."/>
            <person name="Clermont O."/>
            <person name="Cruveiller S."/>
            <person name="Danchin A."/>
            <person name="Diard M."/>
            <person name="Dossat C."/>
            <person name="Karoui M.E."/>
            <person name="Frapy E."/>
            <person name="Garry L."/>
            <person name="Ghigo J.M."/>
            <person name="Gilles A.M."/>
            <person name="Johnson J."/>
            <person name="Le Bouguenec C."/>
            <person name="Lescat M."/>
            <person name="Mangenot S."/>
            <person name="Martinez-Jehanne V."/>
            <person name="Matic I."/>
            <person name="Nassif X."/>
            <person name="Oztas S."/>
            <person name="Petit M.A."/>
            <person name="Pichon C."/>
            <person name="Rouy Z."/>
            <person name="Ruf C.S."/>
            <person name="Schneider D."/>
            <person name="Tourret J."/>
            <person name="Vacherie B."/>
            <person name="Vallenet D."/>
            <person name="Medigue C."/>
            <person name="Rocha E.P.C."/>
            <person name="Denamur E."/>
        </authorList>
    </citation>
    <scope>NUCLEOTIDE SEQUENCE [LARGE SCALE GENOMIC DNA]</scope>
    <source>
        <strain>ATCC 35469 / DSM 13698 / BCRC 15582 / CCUG 18766 / IAM 14443 / JCM 21226 / LMG 7866 / NBRC 102419 / NCTC 12128 / CDC 0568-73</strain>
    </source>
</reference>
<organism>
    <name type="scientific">Escherichia fergusonii (strain ATCC 35469 / DSM 13698 / CCUG 18766 / IAM 14443 / JCM 21226 / LMG 7866 / NBRC 102419 / NCTC 12128 / CDC 0568-73)</name>
    <dbReference type="NCBI Taxonomy" id="585054"/>
    <lineage>
        <taxon>Bacteria</taxon>
        <taxon>Pseudomonadati</taxon>
        <taxon>Pseudomonadota</taxon>
        <taxon>Gammaproteobacteria</taxon>
        <taxon>Enterobacterales</taxon>
        <taxon>Enterobacteriaceae</taxon>
        <taxon>Escherichia</taxon>
    </lineage>
</organism>
<evidence type="ECO:0000255" key="1">
    <source>
        <dbReference type="HAMAP-Rule" id="MF_00116"/>
    </source>
</evidence>
<accession>B7LVK1</accession>
<comment type="function">
    <text evidence="1">This enzyme is involved in nucleotide metabolism: it produces dUMP, the immediate precursor of thymidine nucleotides and it decreases the intracellular concentration of dUTP so that uracil cannot be incorporated into DNA.</text>
</comment>
<comment type="catalytic activity">
    <reaction evidence="1">
        <text>dUTP + H2O = dUMP + diphosphate + H(+)</text>
        <dbReference type="Rhea" id="RHEA:10248"/>
        <dbReference type="ChEBI" id="CHEBI:15377"/>
        <dbReference type="ChEBI" id="CHEBI:15378"/>
        <dbReference type="ChEBI" id="CHEBI:33019"/>
        <dbReference type="ChEBI" id="CHEBI:61555"/>
        <dbReference type="ChEBI" id="CHEBI:246422"/>
        <dbReference type="EC" id="3.6.1.23"/>
    </reaction>
</comment>
<comment type="cofactor">
    <cofactor evidence="1">
        <name>Mg(2+)</name>
        <dbReference type="ChEBI" id="CHEBI:18420"/>
    </cofactor>
</comment>
<comment type="pathway">
    <text evidence="1">Pyrimidine metabolism; dUMP biosynthesis; dUMP from dCTP (dUTP route): step 2/2.</text>
</comment>
<comment type="subunit">
    <text evidence="1">Homotrimer.</text>
</comment>
<comment type="similarity">
    <text evidence="1">Belongs to the dUTPase family.</text>
</comment>
<keyword id="KW-0378">Hydrolase</keyword>
<keyword id="KW-0460">Magnesium</keyword>
<keyword id="KW-0479">Metal-binding</keyword>
<keyword id="KW-0546">Nucleotide metabolism</keyword>
<name>DUT_ESCF3</name>
<gene>
    <name evidence="1" type="primary">dut</name>
    <name type="ordered locus">EFER_3931</name>
</gene>
<dbReference type="EC" id="3.6.1.23" evidence="1"/>
<dbReference type="EMBL" id="CU928158">
    <property type="protein sequence ID" value="CAQ91365.1"/>
    <property type="molecule type" value="Genomic_DNA"/>
</dbReference>
<dbReference type="SMR" id="B7LVK1"/>
<dbReference type="KEGG" id="efe:EFER_3931"/>
<dbReference type="HOGENOM" id="CLU_068508_1_1_6"/>
<dbReference type="OrthoDB" id="9809956at2"/>
<dbReference type="UniPathway" id="UPA00610">
    <property type="reaction ID" value="UER00666"/>
</dbReference>
<dbReference type="Proteomes" id="UP000000745">
    <property type="component" value="Chromosome"/>
</dbReference>
<dbReference type="GO" id="GO:0004170">
    <property type="term" value="F:dUTP diphosphatase activity"/>
    <property type="evidence" value="ECO:0007669"/>
    <property type="project" value="UniProtKB-UniRule"/>
</dbReference>
<dbReference type="GO" id="GO:0000287">
    <property type="term" value="F:magnesium ion binding"/>
    <property type="evidence" value="ECO:0007669"/>
    <property type="project" value="UniProtKB-UniRule"/>
</dbReference>
<dbReference type="GO" id="GO:0006226">
    <property type="term" value="P:dUMP biosynthetic process"/>
    <property type="evidence" value="ECO:0007669"/>
    <property type="project" value="UniProtKB-UniRule"/>
</dbReference>
<dbReference type="GO" id="GO:0046081">
    <property type="term" value="P:dUTP catabolic process"/>
    <property type="evidence" value="ECO:0007669"/>
    <property type="project" value="InterPro"/>
</dbReference>
<dbReference type="CDD" id="cd07557">
    <property type="entry name" value="trimeric_dUTPase"/>
    <property type="match status" value="1"/>
</dbReference>
<dbReference type="FunFam" id="2.70.40.10:FF:000002">
    <property type="entry name" value="dUTP diphosphatase"/>
    <property type="match status" value="1"/>
</dbReference>
<dbReference type="Gene3D" id="2.70.40.10">
    <property type="match status" value="1"/>
</dbReference>
<dbReference type="HAMAP" id="MF_00116">
    <property type="entry name" value="dUTPase_bact"/>
    <property type="match status" value="1"/>
</dbReference>
<dbReference type="InterPro" id="IPR008181">
    <property type="entry name" value="dUTPase"/>
</dbReference>
<dbReference type="InterPro" id="IPR029054">
    <property type="entry name" value="dUTPase-like"/>
</dbReference>
<dbReference type="InterPro" id="IPR036157">
    <property type="entry name" value="dUTPase-like_sf"/>
</dbReference>
<dbReference type="InterPro" id="IPR033704">
    <property type="entry name" value="dUTPase_trimeric"/>
</dbReference>
<dbReference type="NCBIfam" id="TIGR00576">
    <property type="entry name" value="dut"/>
    <property type="match status" value="1"/>
</dbReference>
<dbReference type="NCBIfam" id="NF001862">
    <property type="entry name" value="PRK00601.1"/>
    <property type="match status" value="1"/>
</dbReference>
<dbReference type="PANTHER" id="PTHR11241">
    <property type="entry name" value="DEOXYURIDINE 5'-TRIPHOSPHATE NUCLEOTIDOHYDROLASE"/>
    <property type="match status" value="1"/>
</dbReference>
<dbReference type="PANTHER" id="PTHR11241:SF0">
    <property type="entry name" value="DEOXYURIDINE 5'-TRIPHOSPHATE NUCLEOTIDOHYDROLASE"/>
    <property type="match status" value="1"/>
</dbReference>
<dbReference type="Pfam" id="PF00692">
    <property type="entry name" value="dUTPase"/>
    <property type="match status" value="1"/>
</dbReference>
<dbReference type="SUPFAM" id="SSF51283">
    <property type="entry name" value="dUTPase-like"/>
    <property type="match status" value="1"/>
</dbReference>
<feature type="chain" id="PRO_1000117569" description="Deoxyuridine 5'-triphosphate nucleotidohydrolase">
    <location>
        <begin position="1"/>
        <end position="151"/>
    </location>
</feature>
<feature type="binding site" evidence="1">
    <location>
        <begin position="70"/>
        <end position="72"/>
    </location>
    <ligand>
        <name>substrate</name>
    </ligand>
</feature>
<feature type="binding site" evidence="1">
    <location>
        <position position="83"/>
    </location>
    <ligand>
        <name>substrate</name>
    </ligand>
</feature>
<feature type="binding site" evidence="1">
    <location>
        <begin position="87"/>
        <end position="89"/>
    </location>
    <ligand>
        <name>substrate</name>
    </ligand>
</feature>
<feature type="binding site" evidence="1">
    <location>
        <position position="97"/>
    </location>
    <ligand>
        <name>substrate</name>
    </ligand>
</feature>
<proteinExistence type="inferred from homology"/>
<sequence length="151" mass="16156">MKKIDVKILDPRVGKEFPLPTYATSGSAGLDLRACLDDAVELAPGDTTLVPTGLAIHIADPSLAAMMLPRSGLGHKHGIVLGNLVGLIDSDYQGQLMISVWNRGQDSFTIQPGERIAQMIFVPVVQAEFNLVEDFDATDRGEGGFGHSGRQ</sequence>
<protein>
    <recommendedName>
        <fullName evidence="1">Deoxyuridine 5'-triphosphate nucleotidohydrolase</fullName>
        <shortName evidence="1">dUTPase</shortName>
        <ecNumber evidence="1">3.6.1.23</ecNumber>
    </recommendedName>
    <alternativeName>
        <fullName evidence="1">dUTP pyrophosphatase</fullName>
    </alternativeName>
</protein>